<evidence type="ECO:0000255" key="1"/>
<evidence type="ECO:0000305" key="2"/>
<evidence type="ECO:0000305" key="3">
    <source>
    </source>
</evidence>
<name>YD011_YEAST</name>
<comment type="subcellular location">
    <subcellularLocation>
        <location evidence="2">Membrane</location>
        <topology evidence="2">Multi-pass membrane protein</topology>
    </subcellularLocation>
</comment>
<comment type="miscellaneous">
    <text evidence="2">Partially overlaps YDL010W.</text>
</comment>
<comment type="caution">
    <text evidence="3">Product of a dubious gene prediction unlikely to encode a functional protein. Because of that it is not part of the S.cerevisiae S288c complete/reference proteome set.</text>
</comment>
<organism>
    <name type="scientific">Saccharomyces cerevisiae (strain ATCC 204508 / S288c)</name>
    <name type="common">Baker's yeast</name>
    <dbReference type="NCBI Taxonomy" id="559292"/>
    <lineage>
        <taxon>Eukaryota</taxon>
        <taxon>Fungi</taxon>
        <taxon>Dikarya</taxon>
        <taxon>Ascomycota</taxon>
        <taxon>Saccharomycotina</taxon>
        <taxon>Saccharomycetes</taxon>
        <taxon>Saccharomycetales</taxon>
        <taxon>Saccharomycetaceae</taxon>
        <taxon>Saccharomyces</taxon>
    </lineage>
</organism>
<accession>Q12023</accession>
<feature type="chain" id="PRO_0000299843" description="Putative uncharacterized protein YDL011C">
    <location>
        <begin position="1"/>
        <end position="107"/>
    </location>
</feature>
<feature type="transmembrane region" description="Helical" evidence="1">
    <location>
        <begin position="20"/>
        <end position="40"/>
    </location>
</feature>
<feature type="transmembrane region" description="Helical" evidence="1">
    <location>
        <begin position="49"/>
        <end position="69"/>
    </location>
</feature>
<feature type="transmembrane region" description="Helical" evidence="1">
    <location>
        <begin position="86"/>
        <end position="106"/>
    </location>
</feature>
<reference key="1">
    <citation type="journal article" date="1997" name="Nature">
        <title>The nucleotide sequence of Saccharomyces cerevisiae chromosome IV.</title>
        <authorList>
            <person name="Jacq C."/>
            <person name="Alt-Moerbe J."/>
            <person name="Andre B."/>
            <person name="Arnold W."/>
            <person name="Bahr A."/>
            <person name="Ballesta J.P.G."/>
            <person name="Bargues M."/>
            <person name="Baron L."/>
            <person name="Becker A."/>
            <person name="Biteau N."/>
            <person name="Bloecker H."/>
            <person name="Blugeon C."/>
            <person name="Boskovic J."/>
            <person name="Brandt P."/>
            <person name="Brueckner M."/>
            <person name="Buitrago M.J."/>
            <person name="Coster F."/>
            <person name="Delaveau T."/>
            <person name="del Rey F."/>
            <person name="Dujon B."/>
            <person name="Eide L.G."/>
            <person name="Garcia-Cantalejo J.M."/>
            <person name="Goffeau A."/>
            <person name="Gomez-Peris A."/>
            <person name="Granotier C."/>
            <person name="Hanemann V."/>
            <person name="Hankeln T."/>
            <person name="Hoheisel J.D."/>
            <person name="Jaeger W."/>
            <person name="Jimenez A."/>
            <person name="Jonniaux J.-L."/>
            <person name="Kraemer C."/>
            <person name="Kuester H."/>
            <person name="Laamanen P."/>
            <person name="Legros Y."/>
            <person name="Louis E.J."/>
            <person name="Moeller-Rieker S."/>
            <person name="Monnet A."/>
            <person name="Moro M."/>
            <person name="Mueller-Auer S."/>
            <person name="Nussbaumer B."/>
            <person name="Paricio N."/>
            <person name="Paulin L."/>
            <person name="Perea J."/>
            <person name="Perez-Alonso M."/>
            <person name="Perez-Ortin J.E."/>
            <person name="Pohl T.M."/>
            <person name="Prydz H."/>
            <person name="Purnelle B."/>
            <person name="Rasmussen S.W."/>
            <person name="Remacha M.A."/>
            <person name="Revuelta J.L."/>
            <person name="Rieger M."/>
            <person name="Salom D."/>
            <person name="Saluz H.P."/>
            <person name="Saiz J.E."/>
            <person name="Saren A.-M."/>
            <person name="Schaefer M."/>
            <person name="Scharfe M."/>
            <person name="Schmidt E.R."/>
            <person name="Schneider C."/>
            <person name="Scholler P."/>
            <person name="Schwarz S."/>
            <person name="Soler-Mira A."/>
            <person name="Urrestarazu L.A."/>
            <person name="Verhasselt P."/>
            <person name="Vissers S."/>
            <person name="Voet M."/>
            <person name="Volckaert G."/>
            <person name="Wagner G."/>
            <person name="Wambutt R."/>
            <person name="Wedler E."/>
            <person name="Wedler H."/>
            <person name="Woelfl S."/>
            <person name="Harris D.E."/>
            <person name="Bowman S."/>
            <person name="Brown D."/>
            <person name="Churcher C.M."/>
            <person name="Connor R."/>
            <person name="Dedman K."/>
            <person name="Gentles S."/>
            <person name="Hamlin N."/>
            <person name="Hunt S."/>
            <person name="Jones L."/>
            <person name="McDonald S."/>
            <person name="Murphy L.D."/>
            <person name="Niblett D."/>
            <person name="Odell C."/>
            <person name="Oliver K."/>
            <person name="Rajandream M.A."/>
            <person name="Richards C."/>
            <person name="Shore L."/>
            <person name="Walsh S.V."/>
            <person name="Barrell B.G."/>
            <person name="Dietrich F.S."/>
            <person name="Mulligan J.T."/>
            <person name="Allen E."/>
            <person name="Araujo R."/>
            <person name="Aviles E."/>
            <person name="Berno A."/>
            <person name="Carpenter J."/>
            <person name="Chen E."/>
            <person name="Cherry J.M."/>
            <person name="Chung E."/>
            <person name="Duncan M."/>
            <person name="Hunicke-Smith S."/>
            <person name="Hyman R.W."/>
            <person name="Komp C."/>
            <person name="Lashkari D."/>
            <person name="Lew H."/>
            <person name="Lin D."/>
            <person name="Mosedale D."/>
            <person name="Nakahara K."/>
            <person name="Namath A."/>
            <person name="Oefner P."/>
            <person name="Oh C."/>
            <person name="Petel F.X."/>
            <person name="Roberts D."/>
            <person name="Schramm S."/>
            <person name="Schroeder M."/>
            <person name="Shogren T."/>
            <person name="Shroff N."/>
            <person name="Winant A."/>
            <person name="Yelton M.A."/>
            <person name="Botstein D."/>
            <person name="Davis R.W."/>
            <person name="Johnston M."/>
            <person name="Andrews S."/>
            <person name="Brinkman R."/>
            <person name="Cooper J."/>
            <person name="Ding H."/>
            <person name="Du Z."/>
            <person name="Favello A."/>
            <person name="Fulton L."/>
            <person name="Gattung S."/>
            <person name="Greco T."/>
            <person name="Hallsworth K."/>
            <person name="Hawkins J."/>
            <person name="Hillier L.W."/>
            <person name="Jier M."/>
            <person name="Johnson D."/>
            <person name="Johnston L."/>
            <person name="Kirsten J."/>
            <person name="Kucaba T."/>
            <person name="Langston Y."/>
            <person name="Latreille P."/>
            <person name="Le T."/>
            <person name="Mardis E."/>
            <person name="Menezes S."/>
            <person name="Miller N."/>
            <person name="Nhan M."/>
            <person name="Pauley A."/>
            <person name="Peluso D."/>
            <person name="Rifkin L."/>
            <person name="Riles L."/>
            <person name="Taich A."/>
            <person name="Trevaskis E."/>
            <person name="Vignati D."/>
            <person name="Wilcox L."/>
            <person name="Wohldman P."/>
            <person name="Vaudin M."/>
            <person name="Wilson R."/>
            <person name="Waterston R."/>
            <person name="Albermann K."/>
            <person name="Hani J."/>
            <person name="Heumann K."/>
            <person name="Kleine K."/>
            <person name="Mewes H.-W."/>
            <person name="Zollner A."/>
            <person name="Zaccaria P."/>
        </authorList>
    </citation>
    <scope>NUCLEOTIDE SEQUENCE [LARGE SCALE GENOMIC DNA]</scope>
    <source>
        <strain>ATCC 204508 / S288c</strain>
    </source>
</reference>
<reference key="2">
    <citation type="journal article" date="2014" name="G3 (Bethesda)">
        <title>The reference genome sequence of Saccharomyces cerevisiae: Then and now.</title>
        <authorList>
            <person name="Engel S.R."/>
            <person name="Dietrich F.S."/>
            <person name="Fisk D.G."/>
            <person name="Binkley G."/>
            <person name="Balakrishnan R."/>
            <person name="Costanzo M.C."/>
            <person name="Dwight S.S."/>
            <person name="Hitz B.C."/>
            <person name="Karra K."/>
            <person name="Nash R.S."/>
            <person name="Weng S."/>
            <person name="Wong E.D."/>
            <person name="Lloyd P."/>
            <person name="Skrzypek M.S."/>
            <person name="Miyasato S.R."/>
            <person name="Simison M."/>
            <person name="Cherry J.M."/>
        </authorList>
    </citation>
    <scope>GENOME REANNOTATION</scope>
    <source>
        <strain>ATCC 204508 / S288c</strain>
    </source>
</reference>
<keyword id="KW-0472">Membrane</keyword>
<keyword id="KW-0812">Transmembrane</keyword>
<keyword id="KW-1133">Transmembrane helix</keyword>
<dbReference type="EMBL" id="Z48432">
    <property type="protein sequence ID" value="CAA88348.1"/>
    <property type="molecule type" value="Genomic_DNA"/>
</dbReference>
<dbReference type="EMBL" id="Z74059">
    <property type="protein sequence ID" value="CAA98566.1"/>
    <property type="molecule type" value="Genomic_DNA"/>
</dbReference>
<dbReference type="PIR" id="S52508">
    <property type="entry name" value="S52508"/>
</dbReference>
<dbReference type="SMR" id="Q12023"/>
<dbReference type="DIP" id="DIP-4179N"/>
<dbReference type="IntAct" id="Q12023">
    <property type="interactions" value="1"/>
</dbReference>
<dbReference type="MINT" id="Q12023"/>
<dbReference type="STRING" id="4932.YDL011C"/>
<dbReference type="PaxDb" id="4932-YDL011C"/>
<dbReference type="EnsemblFungi" id="YDL011C_mRNA">
    <property type="protein sequence ID" value="YDL011C"/>
    <property type="gene ID" value="YDL011C"/>
</dbReference>
<dbReference type="AGR" id="SGD:S000002169"/>
<dbReference type="SGD" id="S000002169">
    <property type="gene designation" value="YDL011C"/>
</dbReference>
<dbReference type="HOGENOM" id="CLU_2212029_0_0_1"/>
<dbReference type="GO" id="GO:0016020">
    <property type="term" value="C:membrane"/>
    <property type="evidence" value="ECO:0007669"/>
    <property type="project" value="UniProtKB-SubCell"/>
</dbReference>
<sequence>MADKLSSTDAMGCWSPTFCFISLISSSTSELPLFVVEVGIAAYSLEDPPAILSILVLNALEVSSFISTVKKFAFCATKNTNNNNSVVMLKILAFLLLEGIIIKLFLY</sequence>
<protein>
    <recommendedName>
        <fullName>Putative uncharacterized protein YDL011C</fullName>
    </recommendedName>
</protein>
<gene>
    <name type="ordered locus">YDL011C</name>
</gene>
<proteinExistence type="uncertain"/>